<comment type="miscellaneous">
    <text evidence="2">Partially overlaps YBR175W.</text>
</comment>
<comment type="caution">
    <text evidence="3">Product of a dubious gene prediction unlikely to encode a functional protein. Because of that it is not part of the S.cerevisiae S288c complete/reference proteome set.</text>
</comment>
<reference key="1">
    <citation type="journal article" date="1994" name="EMBO J.">
        <title>Complete DNA sequence of yeast chromosome II.</title>
        <authorList>
            <person name="Feldmann H."/>
            <person name="Aigle M."/>
            <person name="Aljinovic G."/>
            <person name="Andre B."/>
            <person name="Baclet M.C."/>
            <person name="Barthe C."/>
            <person name="Baur A."/>
            <person name="Becam A.-M."/>
            <person name="Biteau N."/>
            <person name="Boles E."/>
            <person name="Brandt T."/>
            <person name="Brendel M."/>
            <person name="Brueckner M."/>
            <person name="Bussereau F."/>
            <person name="Christiansen C."/>
            <person name="Contreras R."/>
            <person name="Crouzet M."/>
            <person name="Cziepluch C."/>
            <person name="Demolis N."/>
            <person name="Delaveau T."/>
            <person name="Doignon F."/>
            <person name="Domdey H."/>
            <person name="Duesterhus S."/>
            <person name="Dubois E."/>
            <person name="Dujon B."/>
            <person name="El Bakkoury M."/>
            <person name="Entian K.-D."/>
            <person name="Feuermann M."/>
            <person name="Fiers W."/>
            <person name="Fobo G.M."/>
            <person name="Fritz C."/>
            <person name="Gassenhuber J."/>
            <person name="Glansdorff N."/>
            <person name="Goffeau A."/>
            <person name="Grivell L.A."/>
            <person name="de Haan M."/>
            <person name="Hein C."/>
            <person name="Herbert C.J."/>
            <person name="Hollenberg C.P."/>
            <person name="Holmstroem K."/>
            <person name="Jacq C."/>
            <person name="Jacquet M."/>
            <person name="Jauniaux J.-C."/>
            <person name="Jonniaux J.-L."/>
            <person name="Kallesoee T."/>
            <person name="Kiesau P."/>
            <person name="Kirchrath L."/>
            <person name="Koetter P."/>
            <person name="Korol S."/>
            <person name="Liebl S."/>
            <person name="Logghe M."/>
            <person name="Lohan A.J.E."/>
            <person name="Louis E.J."/>
            <person name="Li Z.Y."/>
            <person name="Maat M.J."/>
            <person name="Mallet L."/>
            <person name="Mannhaupt G."/>
            <person name="Messenguy F."/>
            <person name="Miosga T."/>
            <person name="Molemans F."/>
            <person name="Mueller S."/>
            <person name="Nasr F."/>
            <person name="Obermaier B."/>
            <person name="Perea J."/>
            <person name="Pierard A."/>
            <person name="Piravandi E."/>
            <person name="Pohl F.M."/>
            <person name="Pohl T.M."/>
            <person name="Potier S."/>
            <person name="Proft M."/>
            <person name="Purnelle B."/>
            <person name="Ramezani Rad M."/>
            <person name="Rieger M."/>
            <person name="Rose M."/>
            <person name="Schaaff-Gerstenschlaeger I."/>
            <person name="Scherens B."/>
            <person name="Schwarzlose C."/>
            <person name="Skala J."/>
            <person name="Slonimski P.P."/>
            <person name="Smits P.H.M."/>
            <person name="Souciet J.-L."/>
            <person name="Steensma H.Y."/>
            <person name="Stucka R."/>
            <person name="Urrestarazu L.A."/>
            <person name="van der Aart Q.J.M."/>
            <person name="Van Dyck L."/>
            <person name="Vassarotti A."/>
            <person name="Vetter I."/>
            <person name="Vierendeels F."/>
            <person name="Vissers S."/>
            <person name="Wagner G."/>
            <person name="de Wergifosse P."/>
            <person name="Wolfe K.H."/>
            <person name="Zagulski M."/>
            <person name="Zimmermann F.K."/>
            <person name="Mewes H.-W."/>
            <person name="Kleine K."/>
        </authorList>
    </citation>
    <scope>NUCLEOTIDE SEQUENCE [LARGE SCALE GENOMIC DNA]</scope>
    <source>
        <strain>ATCC 204508 / S288c</strain>
    </source>
</reference>
<reference key="2">
    <citation type="journal article" date="2014" name="G3 (Bethesda)">
        <title>The reference genome sequence of Saccharomyces cerevisiae: Then and now.</title>
        <authorList>
            <person name="Engel S.R."/>
            <person name="Dietrich F.S."/>
            <person name="Fisk D.G."/>
            <person name="Binkley G."/>
            <person name="Balakrishnan R."/>
            <person name="Costanzo M.C."/>
            <person name="Dwight S.S."/>
            <person name="Hitz B.C."/>
            <person name="Karra K."/>
            <person name="Nash R.S."/>
            <person name="Weng S."/>
            <person name="Wong E.D."/>
            <person name="Lloyd P."/>
            <person name="Skrzypek M.S."/>
            <person name="Miyasato S.R."/>
            <person name="Simison M."/>
            <person name="Cherry J.M."/>
        </authorList>
    </citation>
    <scope>GENOME REANNOTATION</scope>
    <source>
        <strain>ATCC 204508 / S288c</strain>
    </source>
</reference>
<gene>
    <name type="ordered locus">YBR174C</name>
    <name type="ORF">YBR1236</name>
</gene>
<accession>P38294</accession>
<evidence type="ECO:0000256" key="1">
    <source>
        <dbReference type="SAM" id="MobiDB-lite"/>
    </source>
</evidence>
<evidence type="ECO:0000305" key="2"/>
<evidence type="ECO:0000305" key="3">
    <source>
    </source>
</evidence>
<dbReference type="EMBL" id="Z36043">
    <property type="protein sequence ID" value="CAA85135.1"/>
    <property type="molecule type" value="Genomic_DNA"/>
</dbReference>
<dbReference type="PIR" id="S46045">
    <property type="entry name" value="S46045"/>
</dbReference>
<dbReference type="DIP" id="DIP-5143N"/>
<dbReference type="IntAct" id="P38294">
    <property type="interactions" value="1"/>
</dbReference>
<dbReference type="iPTMnet" id="P38294"/>
<dbReference type="PaxDb" id="4932-YBR174C"/>
<dbReference type="EnsemblFungi" id="YBR174C_mRNA">
    <property type="protein sequence ID" value="YBR174C"/>
    <property type="gene ID" value="YBR174C"/>
</dbReference>
<dbReference type="AGR" id="SGD:S000000378"/>
<dbReference type="SGD" id="S000000378">
    <property type="gene designation" value="YBR174C"/>
</dbReference>
<dbReference type="HOGENOM" id="CLU_2252168_0_0_1"/>
<proteinExistence type="uncertain"/>
<organism>
    <name type="scientific">Saccharomyces cerevisiae (strain ATCC 204508 / S288c)</name>
    <name type="common">Baker's yeast</name>
    <dbReference type="NCBI Taxonomy" id="559292"/>
    <lineage>
        <taxon>Eukaryota</taxon>
        <taxon>Fungi</taxon>
        <taxon>Dikarya</taxon>
        <taxon>Ascomycota</taxon>
        <taxon>Saccharomycotina</taxon>
        <taxon>Saccharomycetes</taxon>
        <taxon>Saccharomycetales</taxon>
        <taxon>Saccharomycetaceae</taxon>
        <taxon>Saccharomyces</taxon>
    </lineage>
</organism>
<protein>
    <recommendedName>
        <fullName>Putative uncharacterized protein YBR174C</fullName>
    </recommendedName>
</protein>
<feature type="chain" id="PRO_0000202503" description="Putative uncharacterized protein YBR174C">
    <location>
        <begin position="1"/>
        <end position="104"/>
    </location>
</feature>
<feature type="region of interest" description="Disordered" evidence="1">
    <location>
        <begin position="1"/>
        <end position="24"/>
    </location>
</feature>
<sequence>MISTEKSSDAVAMHCPSGDQHNSEKGLACDVTSVCDTVRLLMSYIRMLSPCVIARNCPSGDIFAQVAFNPFCVPTGVTNWNMLAYNGHLQMNEPTLKLSNIYRQ</sequence>
<name>YB24_YEAST</name>